<gene>
    <name evidence="1" type="primary">hemE</name>
    <name type="ordered locus">Pro_1079</name>
</gene>
<reference key="1">
    <citation type="journal article" date="2003" name="Proc. Natl. Acad. Sci. U.S.A.">
        <title>Genome sequence of the cyanobacterium Prochlorococcus marinus SS120, a nearly minimal oxyphototrophic genome.</title>
        <authorList>
            <person name="Dufresne A."/>
            <person name="Salanoubat M."/>
            <person name="Partensky F."/>
            <person name="Artiguenave F."/>
            <person name="Axmann I.M."/>
            <person name="Barbe V."/>
            <person name="Duprat S."/>
            <person name="Galperin M.Y."/>
            <person name="Koonin E.V."/>
            <person name="Le Gall F."/>
            <person name="Makarova K.S."/>
            <person name="Ostrowski M."/>
            <person name="Oztas S."/>
            <person name="Robert C."/>
            <person name="Rogozin I.B."/>
            <person name="Scanlan D.J."/>
            <person name="Tandeau de Marsac N."/>
            <person name="Weissenbach J."/>
            <person name="Wincker P."/>
            <person name="Wolf Y.I."/>
            <person name="Hess W.R."/>
        </authorList>
    </citation>
    <scope>NUCLEOTIDE SEQUENCE [LARGE SCALE GENOMIC DNA]</scope>
    <source>
        <strain>SARG / CCMP1375 / SS120</strain>
    </source>
</reference>
<keyword id="KW-0963">Cytoplasm</keyword>
<keyword id="KW-0210">Decarboxylase</keyword>
<keyword id="KW-0456">Lyase</keyword>
<keyword id="KW-0627">Porphyrin biosynthesis</keyword>
<keyword id="KW-1185">Reference proteome</keyword>
<dbReference type="EC" id="4.1.1.37" evidence="1"/>
<dbReference type="EMBL" id="AE017126">
    <property type="protein sequence ID" value="AAQ00124.1"/>
    <property type="molecule type" value="Genomic_DNA"/>
</dbReference>
<dbReference type="RefSeq" id="NP_875471.1">
    <property type="nucleotide sequence ID" value="NC_005042.1"/>
</dbReference>
<dbReference type="RefSeq" id="WP_011125231.1">
    <property type="nucleotide sequence ID" value="NC_005042.1"/>
</dbReference>
<dbReference type="SMR" id="Q7VBL3"/>
<dbReference type="STRING" id="167539.Pro_1079"/>
<dbReference type="EnsemblBacteria" id="AAQ00124">
    <property type="protein sequence ID" value="AAQ00124"/>
    <property type="gene ID" value="Pro_1079"/>
</dbReference>
<dbReference type="KEGG" id="pma:Pro_1079"/>
<dbReference type="PATRIC" id="fig|167539.5.peg.1129"/>
<dbReference type="eggNOG" id="COG0407">
    <property type="taxonomic scope" value="Bacteria"/>
</dbReference>
<dbReference type="HOGENOM" id="CLU_040933_0_2_3"/>
<dbReference type="OrthoDB" id="9806656at2"/>
<dbReference type="UniPathway" id="UPA00251">
    <property type="reaction ID" value="UER00321"/>
</dbReference>
<dbReference type="Proteomes" id="UP000001420">
    <property type="component" value="Chromosome"/>
</dbReference>
<dbReference type="GO" id="GO:0005737">
    <property type="term" value="C:cytoplasm"/>
    <property type="evidence" value="ECO:0007669"/>
    <property type="project" value="UniProtKB-SubCell"/>
</dbReference>
<dbReference type="GO" id="GO:0004853">
    <property type="term" value="F:uroporphyrinogen decarboxylase activity"/>
    <property type="evidence" value="ECO:0007669"/>
    <property type="project" value="UniProtKB-UniRule"/>
</dbReference>
<dbReference type="GO" id="GO:0006782">
    <property type="term" value="P:protoporphyrinogen IX biosynthetic process"/>
    <property type="evidence" value="ECO:0007669"/>
    <property type="project" value="UniProtKB-UniRule"/>
</dbReference>
<dbReference type="CDD" id="cd00717">
    <property type="entry name" value="URO-D"/>
    <property type="match status" value="1"/>
</dbReference>
<dbReference type="FunFam" id="3.20.20.210:FF:000006">
    <property type="entry name" value="Uroporphyrinogen decarboxylase"/>
    <property type="match status" value="1"/>
</dbReference>
<dbReference type="Gene3D" id="3.20.20.210">
    <property type="match status" value="1"/>
</dbReference>
<dbReference type="HAMAP" id="MF_00218">
    <property type="entry name" value="URO_D"/>
    <property type="match status" value="1"/>
</dbReference>
<dbReference type="InterPro" id="IPR038071">
    <property type="entry name" value="UROD/MetE-like_sf"/>
</dbReference>
<dbReference type="InterPro" id="IPR006361">
    <property type="entry name" value="Uroporphyrinogen_deCO2ase_HemE"/>
</dbReference>
<dbReference type="InterPro" id="IPR000257">
    <property type="entry name" value="Uroporphyrinogen_deCOase"/>
</dbReference>
<dbReference type="NCBIfam" id="TIGR01464">
    <property type="entry name" value="hemE"/>
    <property type="match status" value="1"/>
</dbReference>
<dbReference type="PANTHER" id="PTHR21091">
    <property type="entry name" value="METHYLTETRAHYDROFOLATE:HOMOCYSTEINE METHYLTRANSFERASE RELATED"/>
    <property type="match status" value="1"/>
</dbReference>
<dbReference type="PANTHER" id="PTHR21091:SF169">
    <property type="entry name" value="UROPORPHYRINOGEN DECARBOXYLASE"/>
    <property type="match status" value="1"/>
</dbReference>
<dbReference type="Pfam" id="PF01208">
    <property type="entry name" value="URO-D"/>
    <property type="match status" value="1"/>
</dbReference>
<dbReference type="SUPFAM" id="SSF51726">
    <property type="entry name" value="UROD/MetE-like"/>
    <property type="match status" value="1"/>
</dbReference>
<dbReference type="PROSITE" id="PS00906">
    <property type="entry name" value="UROD_1"/>
    <property type="match status" value="1"/>
</dbReference>
<dbReference type="PROSITE" id="PS00907">
    <property type="entry name" value="UROD_2"/>
    <property type="match status" value="1"/>
</dbReference>
<name>DCUP_PROMA</name>
<sequence>MTDSLPLLLRAARGESVNRPPVWMMRQAGRYMKVYRELRDNHPSFRERSENPDLSYEISMQPFREFKPDGVILFSDILTPLPGMGIDFDIVESKGPLINDPIRTLEQVKTLRPLEPQVSLPFVGEVLGRLRESVKNEAAVLGFVGAPWTLAAYVVEGKSSKNYSVIKAMAFQQPDLLHKLLNHFAESIANYLKYQIESGAQVVQMFDSWAGQLSPIDYDNYAAPYQKKVVDLVKQSHPDTPMILYISGSAGVIERMAKTGVDIVSLDWTVDMAEGCARLPNNIGIQGNVDPGILFGTPKMIQERIIDTVKKAKGRKHILNLGHGILPGTPEENAKVFFETGKNINNLISNI</sequence>
<protein>
    <recommendedName>
        <fullName evidence="1">Uroporphyrinogen decarboxylase</fullName>
        <shortName evidence="1">UPD</shortName>
        <shortName evidence="1">URO-D</shortName>
        <ecNumber evidence="1">4.1.1.37</ecNumber>
    </recommendedName>
</protein>
<accession>Q7VBL3</accession>
<comment type="function">
    <text evidence="1">Catalyzes the decarboxylation of four acetate groups of uroporphyrinogen-III to yield coproporphyrinogen-III.</text>
</comment>
<comment type="catalytic activity">
    <reaction evidence="1">
        <text>uroporphyrinogen III + 4 H(+) = coproporphyrinogen III + 4 CO2</text>
        <dbReference type="Rhea" id="RHEA:19865"/>
        <dbReference type="ChEBI" id="CHEBI:15378"/>
        <dbReference type="ChEBI" id="CHEBI:16526"/>
        <dbReference type="ChEBI" id="CHEBI:57308"/>
        <dbReference type="ChEBI" id="CHEBI:57309"/>
        <dbReference type="EC" id="4.1.1.37"/>
    </reaction>
</comment>
<comment type="pathway">
    <text evidence="1">Porphyrin-containing compound metabolism; protoporphyrin-IX biosynthesis; coproporphyrinogen-III from 5-aminolevulinate: step 4/4.</text>
</comment>
<comment type="subunit">
    <text evidence="1">Homodimer.</text>
</comment>
<comment type="subcellular location">
    <subcellularLocation>
        <location evidence="1">Cytoplasm</location>
    </subcellularLocation>
</comment>
<comment type="similarity">
    <text evidence="1">Belongs to the uroporphyrinogen decarboxylase family.</text>
</comment>
<evidence type="ECO:0000255" key="1">
    <source>
        <dbReference type="HAMAP-Rule" id="MF_00218"/>
    </source>
</evidence>
<feature type="chain" id="PRO_0000187623" description="Uroporphyrinogen decarboxylase">
    <location>
        <begin position="1"/>
        <end position="351"/>
    </location>
</feature>
<feature type="binding site" evidence="1">
    <location>
        <begin position="26"/>
        <end position="30"/>
    </location>
    <ligand>
        <name>substrate</name>
    </ligand>
</feature>
<feature type="binding site" evidence="1">
    <location>
        <position position="45"/>
    </location>
    <ligand>
        <name>substrate</name>
    </ligand>
</feature>
<feature type="binding site" evidence="1">
    <location>
        <position position="76"/>
    </location>
    <ligand>
        <name>substrate</name>
    </ligand>
</feature>
<feature type="binding site" evidence="1">
    <location>
        <position position="153"/>
    </location>
    <ligand>
        <name>substrate</name>
    </ligand>
</feature>
<feature type="binding site" evidence="1">
    <location>
        <position position="208"/>
    </location>
    <ligand>
        <name>substrate</name>
    </ligand>
</feature>
<feature type="binding site" evidence="1">
    <location>
        <position position="323"/>
    </location>
    <ligand>
        <name>substrate</name>
    </ligand>
</feature>
<feature type="site" description="Transition state stabilizer" evidence="1">
    <location>
        <position position="76"/>
    </location>
</feature>
<proteinExistence type="inferred from homology"/>
<organism>
    <name type="scientific">Prochlorococcus marinus (strain SARG / CCMP1375 / SS120)</name>
    <dbReference type="NCBI Taxonomy" id="167539"/>
    <lineage>
        <taxon>Bacteria</taxon>
        <taxon>Bacillati</taxon>
        <taxon>Cyanobacteriota</taxon>
        <taxon>Cyanophyceae</taxon>
        <taxon>Synechococcales</taxon>
        <taxon>Prochlorococcaceae</taxon>
        <taxon>Prochlorococcus</taxon>
    </lineage>
</organism>